<reference key="1">
    <citation type="journal article" date="2003" name="Proc. Natl. Acad. Sci. U.S.A.">
        <title>The complete genome sequence of Mycobacterium bovis.</title>
        <authorList>
            <person name="Garnier T."/>
            <person name="Eiglmeier K."/>
            <person name="Camus J.-C."/>
            <person name="Medina N."/>
            <person name="Mansoor H."/>
            <person name="Pryor M."/>
            <person name="Duthoy S."/>
            <person name="Grondin S."/>
            <person name="Lacroix C."/>
            <person name="Monsempe C."/>
            <person name="Simon S."/>
            <person name="Harris B."/>
            <person name="Atkin R."/>
            <person name="Doggett J."/>
            <person name="Mayes R."/>
            <person name="Keating L."/>
            <person name="Wheeler P.R."/>
            <person name="Parkhill J."/>
            <person name="Barrell B.G."/>
            <person name="Cole S.T."/>
            <person name="Gordon S.V."/>
            <person name="Hewinson R.G."/>
        </authorList>
    </citation>
    <scope>NUCLEOTIDE SEQUENCE [LARGE SCALE GENOMIC DNA]</scope>
    <source>
        <strain>ATCC BAA-935 / AF2122/97</strain>
    </source>
</reference>
<reference key="2">
    <citation type="journal article" date="2017" name="Genome Announc.">
        <title>Updated reference genome sequence and annotation of Mycobacterium bovis AF2122/97.</title>
        <authorList>
            <person name="Malone K.M."/>
            <person name="Farrell D."/>
            <person name="Stuber T.P."/>
            <person name="Schubert O.T."/>
            <person name="Aebersold R."/>
            <person name="Robbe-Austerman S."/>
            <person name="Gordon S.V."/>
        </authorList>
    </citation>
    <scope>NUCLEOTIDE SEQUENCE [LARGE SCALE GENOMIC DNA]</scope>
    <scope>GENOME REANNOTATION</scope>
    <source>
        <strain>ATCC BAA-935 / AF2122/97</strain>
    </source>
</reference>
<feature type="chain" id="PRO_0000201847" description="Lysoplasmalogenase">
    <location>
        <begin position="1"/>
        <end position="261"/>
    </location>
</feature>
<feature type="transmembrane region" description="Helical" evidence="2">
    <location>
        <begin position="29"/>
        <end position="49"/>
    </location>
</feature>
<feature type="transmembrane region" description="Helical" evidence="2">
    <location>
        <begin position="65"/>
        <end position="85"/>
    </location>
</feature>
<feature type="transmembrane region" description="Helical" evidence="2">
    <location>
        <begin position="90"/>
        <end position="107"/>
    </location>
</feature>
<feature type="transmembrane region" description="Helical" evidence="2">
    <location>
        <begin position="111"/>
        <end position="133"/>
    </location>
</feature>
<feature type="transmembrane region" description="Helical" evidence="2">
    <location>
        <begin position="146"/>
        <end position="166"/>
    </location>
</feature>
<feature type="transmembrane region" description="Helical" evidence="2">
    <location>
        <begin position="172"/>
        <end position="192"/>
    </location>
</feature>
<feature type="transmembrane region" description="Helical" evidence="2">
    <location>
        <begin position="197"/>
        <end position="217"/>
    </location>
</feature>
<feature type="transmembrane region" description="Helical" evidence="2">
    <location>
        <begin position="227"/>
        <end position="247"/>
    </location>
</feature>
<keyword id="KW-1003">Cell membrane</keyword>
<keyword id="KW-0378">Hydrolase</keyword>
<keyword id="KW-0443">Lipid metabolism</keyword>
<keyword id="KW-0472">Membrane</keyword>
<keyword id="KW-1185">Reference proteome</keyword>
<keyword id="KW-0812">Transmembrane</keyword>
<keyword id="KW-1133">Transmembrane helix</keyword>
<comment type="function">
    <text evidence="1">Specifically hydrolyzes the vinyl ether bond of lysoplasmenylcholine (pLPC) and lysoplasmenylethanolamine (pLPE) to release a fatty aldehyde and glycerophospho-choline or glycerophospho-ethanolamine.</text>
</comment>
<comment type="catalytic activity">
    <reaction evidence="1">
        <text>a 1-O-(1Z-alkenyl)-sn-glycero-3-phosphocholine + H2O = a 2,3-saturated aldehyde + sn-glycerol 3-phosphocholine</text>
        <dbReference type="Rhea" id="RHEA:22544"/>
        <dbReference type="ChEBI" id="CHEBI:15377"/>
        <dbReference type="ChEBI" id="CHEBI:16870"/>
        <dbReference type="ChEBI" id="CHEBI:73359"/>
        <dbReference type="ChEBI" id="CHEBI:77287"/>
        <dbReference type="EC" id="3.3.2.2"/>
    </reaction>
</comment>
<comment type="catalytic activity">
    <reaction evidence="1">
        <text>a 1-O-(1Z-alkenyl)-sn-glycero-3-phosphoethanolamine + H2O = a 2,3-saturated aldehyde + sn-glycero-3-phosphoethanolamine</text>
        <dbReference type="Rhea" id="RHEA:16905"/>
        <dbReference type="ChEBI" id="CHEBI:15377"/>
        <dbReference type="ChEBI" id="CHEBI:73359"/>
        <dbReference type="ChEBI" id="CHEBI:77288"/>
        <dbReference type="ChEBI" id="CHEBI:143890"/>
        <dbReference type="EC" id="3.3.2.2"/>
    </reaction>
</comment>
<comment type="subcellular location">
    <subcellularLocation>
        <location evidence="1">Cell membrane</location>
        <topology evidence="2">Multi-pass membrane protein</topology>
    </subcellularLocation>
</comment>
<comment type="similarity">
    <text evidence="3">Belongs to the TMEM86 family.</text>
</comment>
<comment type="sequence caution" evidence="3">
    <conflict type="erroneous initiation">
        <sequence resource="EMBL-CDS" id="SIU00039"/>
    </conflict>
    <text>Truncated N-terminus.</text>
</comment>
<gene>
    <name type="ordered locus">BQ2027_MB1436</name>
</gene>
<name>LYPGN_MYCBO</name>
<sequence length="261" mass="27391">MGSIAGFSSAVLSKLGIPVPYAPRLLAGGWVVAGWAGLAYGVYLTVIALRLPPGSELTGHAMLQPAFKASMAVLLAAAAVAHPIGRERRWLVPALLLSATGDWLLAIPWWTWAFVFGLGAFLLAHLCFIGALLPLARQAAPSRGRVAAVVAMCVASAGLLVWFWPHLGKDNLTIPVTVYIVALSAMVCTALLARLPTIWTAVGAVCFAASDSMIGIGRFILGNEALAVPIWWSYAAAEILITAGFFFGREVPDNAAAPTDS</sequence>
<accession>P64838</accession>
<accession>A0A1R3XY82</accession>
<accession>P71669</accession>
<accession>X2BHS7</accession>
<proteinExistence type="inferred from homology"/>
<evidence type="ECO:0000250" key="1">
    <source>
        <dbReference type="UniProtKB" id="P9WG51"/>
    </source>
</evidence>
<evidence type="ECO:0000255" key="2"/>
<evidence type="ECO:0000305" key="3"/>
<dbReference type="EC" id="3.3.2.2" evidence="1"/>
<dbReference type="EMBL" id="LT708304">
    <property type="protein sequence ID" value="SIU00039.1"/>
    <property type="status" value="ALT_INIT"/>
    <property type="molecule type" value="Genomic_DNA"/>
</dbReference>
<dbReference type="RefSeq" id="NP_855088.1">
    <property type="nucleotide sequence ID" value="NC_002945.3"/>
</dbReference>
<dbReference type="KEGG" id="mbo:BQ2027_MB1436"/>
<dbReference type="PATRIC" id="fig|233413.5.peg.1571"/>
<dbReference type="Proteomes" id="UP000001419">
    <property type="component" value="Chromosome"/>
</dbReference>
<dbReference type="GO" id="GO:0005886">
    <property type="term" value="C:plasma membrane"/>
    <property type="evidence" value="ECO:0007669"/>
    <property type="project" value="UniProtKB-SubCell"/>
</dbReference>
<dbReference type="GO" id="GO:0016787">
    <property type="term" value="F:hydrolase activity"/>
    <property type="evidence" value="ECO:0007669"/>
    <property type="project" value="UniProtKB-KW"/>
</dbReference>
<dbReference type="GO" id="GO:0006629">
    <property type="term" value="P:lipid metabolic process"/>
    <property type="evidence" value="ECO:0007669"/>
    <property type="project" value="UniProtKB-KW"/>
</dbReference>
<dbReference type="InterPro" id="IPR012506">
    <property type="entry name" value="TMEM86B-like"/>
</dbReference>
<dbReference type="PANTHER" id="PTHR31885">
    <property type="entry name" value="GH04784P"/>
    <property type="match status" value="1"/>
</dbReference>
<dbReference type="PANTHER" id="PTHR31885:SF6">
    <property type="entry name" value="GH04784P"/>
    <property type="match status" value="1"/>
</dbReference>
<dbReference type="Pfam" id="PF07947">
    <property type="entry name" value="YhhN"/>
    <property type="match status" value="1"/>
</dbReference>
<organism>
    <name type="scientific">Mycobacterium bovis (strain ATCC BAA-935 / AF2122/97)</name>
    <dbReference type="NCBI Taxonomy" id="233413"/>
    <lineage>
        <taxon>Bacteria</taxon>
        <taxon>Bacillati</taxon>
        <taxon>Actinomycetota</taxon>
        <taxon>Actinomycetes</taxon>
        <taxon>Mycobacteriales</taxon>
        <taxon>Mycobacteriaceae</taxon>
        <taxon>Mycobacterium</taxon>
        <taxon>Mycobacterium tuberculosis complex</taxon>
    </lineage>
</organism>
<protein>
    <recommendedName>
        <fullName evidence="1">Lysoplasmalogenase</fullName>
        <ecNumber evidence="1">3.3.2.2</ecNumber>
    </recommendedName>
</protein>